<organism>
    <name type="scientific">Borreliella burgdorferi (strain ZS7)</name>
    <name type="common">Borrelia burgdorferi</name>
    <dbReference type="NCBI Taxonomy" id="445985"/>
    <lineage>
        <taxon>Bacteria</taxon>
        <taxon>Pseudomonadati</taxon>
        <taxon>Spirochaetota</taxon>
        <taxon>Spirochaetia</taxon>
        <taxon>Spirochaetales</taxon>
        <taxon>Borreliaceae</taxon>
        <taxon>Borreliella</taxon>
    </lineage>
</organism>
<reference key="1">
    <citation type="journal article" date="2011" name="J. Bacteriol.">
        <title>Whole-genome sequences of thirteen isolates of Borrelia burgdorferi.</title>
        <authorList>
            <person name="Schutzer S.E."/>
            <person name="Fraser-Liggett C.M."/>
            <person name="Casjens S.R."/>
            <person name="Qiu W.G."/>
            <person name="Dunn J.J."/>
            <person name="Mongodin E.F."/>
            <person name="Luft B.J."/>
        </authorList>
    </citation>
    <scope>NUCLEOTIDE SEQUENCE [LARGE SCALE GENOMIC DNA]</scope>
    <source>
        <strain>ZS7</strain>
    </source>
</reference>
<proteinExistence type="inferred from homology"/>
<dbReference type="EMBL" id="CP001205">
    <property type="protein sequence ID" value="ACK75146.1"/>
    <property type="molecule type" value="Genomic_DNA"/>
</dbReference>
<dbReference type="RefSeq" id="WP_002557081.1">
    <property type="nucleotide sequence ID" value="NC_011728.1"/>
</dbReference>
<dbReference type="SMR" id="B7J255"/>
<dbReference type="GeneID" id="56567925"/>
<dbReference type="KEGG" id="bbz:BbuZS7_0501"/>
<dbReference type="HOGENOM" id="CLU_061015_2_1_12"/>
<dbReference type="Proteomes" id="UP000006901">
    <property type="component" value="Chromosome"/>
</dbReference>
<dbReference type="GO" id="GO:1990904">
    <property type="term" value="C:ribonucleoprotein complex"/>
    <property type="evidence" value="ECO:0007669"/>
    <property type="project" value="UniProtKB-KW"/>
</dbReference>
<dbReference type="GO" id="GO:0005840">
    <property type="term" value="C:ribosome"/>
    <property type="evidence" value="ECO:0007669"/>
    <property type="project" value="UniProtKB-KW"/>
</dbReference>
<dbReference type="GO" id="GO:0019843">
    <property type="term" value="F:rRNA binding"/>
    <property type="evidence" value="ECO:0007669"/>
    <property type="project" value="UniProtKB-UniRule"/>
</dbReference>
<dbReference type="GO" id="GO:0003735">
    <property type="term" value="F:structural constituent of ribosome"/>
    <property type="evidence" value="ECO:0007669"/>
    <property type="project" value="InterPro"/>
</dbReference>
<dbReference type="GO" id="GO:0000049">
    <property type="term" value="F:tRNA binding"/>
    <property type="evidence" value="ECO:0007669"/>
    <property type="project" value="UniProtKB-UniRule"/>
</dbReference>
<dbReference type="GO" id="GO:0006412">
    <property type="term" value="P:translation"/>
    <property type="evidence" value="ECO:0007669"/>
    <property type="project" value="UniProtKB-UniRule"/>
</dbReference>
<dbReference type="FunFam" id="3.30.1440.10:FF:000001">
    <property type="entry name" value="50S ribosomal protein L5"/>
    <property type="match status" value="1"/>
</dbReference>
<dbReference type="Gene3D" id="3.30.1440.10">
    <property type="match status" value="1"/>
</dbReference>
<dbReference type="HAMAP" id="MF_01333_B">
    <property type="entry name" value="Ribosomal_uL5_B"/>
    <property type="match status" value="1"/>
</dbReference>
<dbReference type="InterPro" id="IPR002132">
    <property type="entry name" value="Ribosomal_uL5"/>
</dbReference>
<dbReference type="InterPro" id="IPR020930">
    <property type="entry name" value="Ribosomal_uL5_bac-type"/>
</dbReference>
<dbReference type="InterPro" id="IPR031309">
    <property type="entry name" value="Ribosomal_uL5_C"/>
</dbReference>
<dbReference type="InterPro" id="IPR020929">
    <property type="entry name" value="Ribosomal_uL5_CS"/>
</dbReference>
<dbReference type="InterPro" id="IPR022803">
    <property type="entry name" value="Ribosomal_uL5_dom_sf"/>
</dbReference>
<dbReference type="InterPro" id="IPR031310">
    <property type="entry name" value="Ribosomal_uL5_N"/>
</dbReference>
<dbReference type="NCBIfam" id="NF000585">
    <property type="entry name" value="PRK00010.1"/>
    <property type="match status" value="1"/>
</dbReference>
<dbReference type="PANTHER" id="PTHR11994">
    <property type="entry name" value="60S RIBOSOMAL PROTEIN L11-RELATED"/>
    <property type="match status" value="1"/>
</dbReference>
<dbReference type="Pfam" id="PF00281">
    <property type="entry name" value="Ribosomal_L5"/>
    <property type="match status" value="1"/>
</dbReference>
<dbReference type="Pfam" id="PF00673">
    <property type="entry name" value="Ribosomal_L5_C"/>
    <property type="match status" value="1"/>
</dbReference>
<dbReference type="PIRSF" id="PIRSF002161">
    <property type="entry name" value="Ribosomal_L5"/>
    <property type="match status" value="1"/>
</dbReference>
<dbReference type="SUPFAM" id="SSF55282">
    <property type="entry name" value="RL5-like"/>
    <property type="match status" value="1"/>
</dbReference>
<dbReference type="PROSITE" id="PS00358">
    <property type="entry name" value="RIBOSOMAL_L5"/>
    <property type="match status" value="1"/>
</dbReference>
<gene>
    <name evidence="1" type="primary">rplE</name>
    <name type="ordered locus">BbuZS7_0501</name>
</gene>
<accession>B7J255</accession>
<comment type="function">
    <text evidence="1">This is one of the proteins that bind and probably mediate the attachment of the 5S RNA into the large ribosomal subunit, where it forms part of the central protuberance. In the 70S ribosome it contacts protein S13 of the 30S subunit (bridge B1b), connecting the 2 subunits; this bridge is implicated in subunit movement. Contacts the P site tRNA; the 5S rRNA and some of its associated proteins might help stabilize positioning of ribosome-bound tRNAs.</text>
</comment>
<comment type="subunit">
    <text evidence="1">Part of the 50S ribosomal subunit; part of the 5S rRNA/L5/L18/L25 subcomplex. Contacts the 5S rRNA and the P site tRNA. Forms a bridge to the 30S subunit in the 70S ribosome.</text>
</comment>
<comment type="similarity">
    <text evidence="1">Belongs to the universal ribosomal protein uL5 family.</text>
</comment>
<protein>
    <recommendedName>
        <fullName evidence="1">Large ribosomal subunit protein uL5</fullName>
    </recommendedName>
    <alternativeName>
        <fullName evidence="2">50S ribosomal protein L5</fullName>
    </alternativeName>
</protein>
<feature type="chain" id="PRO_1000142357" description="Large ribosomal subunit protein uL5">
    <location>
        <begin position="1"/>
        <end position="182"/>
    </location>
</feature>
<evidence type="ECO:0000255" key="1">
    <source>
        <dbReference type="HAMAP-Rule" id="MF_01333"/>
    </source>
</evidence>
<evidence type="ECO:0000305" key="2"/>
<keyword id="KW-0687">Ribonucleoprotein</keyword>
<keyword id="KW-0689">Ribosomal protein</keyword>
<keyword id="KW-0694">RNA-binding</keyword>
<keyword id="KW-0699">rRNA-binding</keyword>
<keyword id="KW-0820">tRNA-binding</keyword>
<name>RL5_BORBZ</name>
<sequence>MNYVPELKKYYKDSVIKELVKEFEYKSIMQVPKLEKIVISVGVGEAVRNKKLLDSAVLELAQITGQKAVKTKAKKAIAGFKIRQGQEIGAKVTLRGNAMYEFLYKLIHLALPRVKDFRGINGDAFDGNGNYSFGITEQIIFSEIDYDKIERISGLNITIVTTASNDKESKALLLKFGMPFSN</sequence>